<feature type="chain" id="PRO_1000076223" description="Arginine--tRNA ligase">
    <location>
        <begin position="1"/>
        <end position="552"/>
    </location>
</feature>
<feature type="short sequence motif" description="'HIGH' region">
    <location>
        <begin position="123"/>
        <end position="133"/>
    </location>
</feature>
<proteinExistence type="inferred from homology"/>
<accession>A4SGY3</accession>
<dbReference type="EC" id="6.1.1.19" evidence="1"/>
<dbReference type="EMBL" id="CP000607">
    <property type="protein sequence ID" value="ABP37742.1"/>
    <property type="molecule type" value="Genomic_DNA"/>
</dbReference>
<dbReference type="SMR" id="A4SGY3"/>
<dbReference type="STRING" id="290318.Cvib_1732"/>
<dbReference type="KEGG" id="pvi:Cvib_1732"/>
<dbReference type="eggNOG" id="COG0018">
    <property type="taxonomic scope" value="Bacteria"/>
</dbReference>
<dbReference type="HOGENOM" id="CLU_006406_0_1_10"/>
<dbReference type="OrthoDB" id="9805987at2"/>
<dbReference type="GO" id="GO:0005737">
    <property type="term" value="C:cytoplasm"/>
    <property type="evidence" value="ECO:0007669"/>
    <property type="project" value="UniProtKB-SubCell"/>
</dbReference>
<dbReference type="GO" id="GO:0004814">
    <property type="term" value="F:arginine-tRNA ligase activity"/>
    <property type="evidence" value="ECO:0007669"/>
    <property type="project" value="UniProtKB-UniRule"/>
</dbReference>
<dbReference type="GO" id="GO:0005524">
    <property type="term" value="F:ATP binding"/>
    <property type="evidence" value="ECO:0007669"/>
    <property type="project" value="UniProtKB-UniRule"/>
</dbReference>
<dbReference type="GO" id="GO:0006420">
    <property type="term" value="P:arginyl-tRNA aminoacylation"/>
    <property type="evidence" value="ECO:0007669"/>
    <property type="project" value="UniProtKB-UniRule"/>
</dbReference>
<dbReference type="FunFam" id="1.10.730.10:FF:000008">
    <property type="entry name" value="Arginine--tRNA ligase"/>
    <property type="match status" value="1"/>
</dbReference>
<dbReference type="Gene3D" id="3.30.1360.70">
    <property type="entry name" value="Arginyl tRNA synthetase N-terminal domain"/>
    <property type="match status" value="1"/>
</dbReference>
<dbReference type="Gene3D" id="3.40.50.620">
    <property type="entry name" value="HUPs"/>
    <property type="match status" value="1"/>
</dbReference>
<dbReference type="Gene3D" id="1.10.730.10">
    <property type="entry name" value="Isoleucyl-tRNA Synthetase, Domain 1"/>
    <property type="match status" value="1"/>
</dbReference>
<dbReference type="HAMAP" id="MF_00123">
    <property type="entry name" value="Arg_tRNA_synth"/>
    <property type="match status" value="1"/>
</dbReference>
<dbReference type="InterPro" id="IPR001278">
    <property type="entry name" value="Arg-tRNA-ligase"/>
</dbReference>
<dbReference type="InterPro" id="IPR005148">
    <property type="entry name" value="Arg-tRNA-synth_N"/>
</dbReference>
<dbReference type="InterPro" id="IPR036695">
    <property type="entry name" value="Arg-tRNA-synth_N_sf"/>
</dbReference>
<dbReference type="InterPro" id="IPR035684">
    <property type="entry name" value="ArgRS_core"/>
</dbReference>
<dbReference type="InterPro" id="IPR008909">
    <property type="entry name" value="DALR_anticod-bd"/>
</dbReference>
<dbReference type="InterPro" id="IPR014729">
    <property type="entry name" value="Rossmann-like_a/b/a_fold"/>
</dbReference>
<dbReference type="InterPro" id="IPR009080">
    <property type="entry name" value="tRNAsynth_Ia_anticodon-bd"/>
</dbReference>
<dbReference type="NCBIfam" id="TIGR00456">
    <property type="entry name" value="argS"/>
    <property type="match status" value="1"/>
</dbReference>
<dbReference type="PANTHER" id="PTHR11956:SF5">
    <property type="entry name" value="ARGININE--TRNA LIGASE, CYTOPLASMIC"/>
    <property type="match status" value="1"/>
</dbReference>
<dbReference type="PANTHER" id="PTHR11956">
    <property type="entry name" value="ARGINYL-TRNA SYNTHETASE"/>
    <property type="match status" value="1"/>
</dbReference>
<dbReference type="Pfam" id="PF03485">
    <property type="entry name" value="Arg_tRNA_synt_N"/>
    <property type="match status" value="1"/>
</dbReference>
<dbReference type="Pfam" id="PF05746">
    <property type="entry name" value="DALR_1"/>
    <property type="match status" value="1"/>
</dbReference>
<dbReference type="Pfam" id="PF00750">
    <property type="entry name" value="tRNA-synt_1d"/>
    <property type="match status" value="1"/>
</dbReference>
<dbReference type="PRINTS" id="PR01038">
    <property type="entry name" value="TRNASYNTHARG"/>
</dbReference>
<dbReference type="SMART" id="SM01016">
    <property type="entry name" value="Arg_tRNA_synt_N"/>
    <property type="match status" value="1"/>
</dbReference>
<dbReference type="SMART" id="SM00836">
    <property type="entry name" value="DALR_1"/>
    <property type="match status" value="1"/>
</dbReference>
<dbReference type="SUPFAM" id="SSF47323">
    <property type="entry name" value="Anticodon-binding domain of a subclass of class I aminoacyl-tRNA synthetases"/>
    <property type="match status" value="1"/>
</dbReference>
<dbReference type="SUPFAM" id="SSF55190">
    <property type="entry name" value="Arginyl-tRNA synthetase (ArgRS), N-terminal 'additional' domain"/>
    <property type="match status" value="1"/>
</dbReference>
<dbReference type="SUPFAM" id="SSF52374">
    <property type="entry name" value="Nucleotidylyl transferase"/>
    <property type="match status" value="1"/>
</dbReference>
<protein>
    <recommendedName>
        <fullName evidence="1">Arginine--tRNA ligase</fullName>
        <ecNumber evidence="1">6.1.1.19</ecNumber>
    </recommendedName>
    <alternativeName>
        <fullName evidence="1">Arginyl-tRNA synthetase</fullName>
        <shortName evidence="1">ArgRS</shortName>
    </alternativeName>
</protein>
<sequence length="552" mass="61658">MQQFFRPVIQDALRSAGIETGQPVQIEKPASAKFGHFSTNIAFLSAKELGKNPRTLAQELIGHLRFPSGSIEKTEVAGPGFINFFLTPPFIMDSLGEVLRQGEAFGRGTSGNGEKAIVEYVSANPTGPLTIGRGRGGVLGDCIANLFEAEGYSVTREYYFNDAGRQMQILGESVRFRYLERCGRKVDFPDTHYQGGYIGDIADRIYQEQGDSLADAEGTGEFKSTAEAIIFSSIKKTLERLGIRHDSFFNEHTLYTPDENGATRNSRVIDALRQKGFIDEYEGATWFLTTKLGQEKNKVLVKSTGEPSYRLPDIAYHLTKYDRGFGVIVNVFGADHIDEYPDVIEALKILGHDTSRIRIAINQFVTTTVDGETVKMSTRKGNADLLDDLIDDVGADATRLFFIMRSKDSHLNFDVDLARKQSKDNPVFYLQYAHARICSLLRMAWSENGFNPEKLPDLALLKTLSSPEELQLALALLDFPDMVRSALRLLEPQKMVDYMHSIAELYHRFYQECPILKAEADTANARLLLSLATRQVLQNGFRILGISAPESM</sequence>
<organism>
    <name type="scientific">Chlorobium phaeovibrioides (strain DSM 265 / 1930)</name>
    <name type="common">Prosthecochloris vibrioformis (strain DSM 265)</name>
    <dbReference type="NCBI Taxonomy" id="290318"/>
    <lineage>
        <taxon>Bacteria</taxon>
        <taxon>Pseudomonadati</taxon>
        <taxon>Chlorobiota</taxon>
        <taxon>Chlorobiia</taxon>
        <taxon>Chlorobiales</taxon>
        <taxon>Chlorobiaceae</taxon>
        <taxon>Chlorobium/Pelodictyon group</taxon>
        <taxon>Chlorobium</taxon>
    </lineage>
</organism>
<evidence type="ECO:0000255" key="1">
    <source>
        <dbReference type="HAMAP-Rule" id="MF_00123"/>
    </source>
</evidence>
<keyword id="KW-0030">Aminoacyl-tRNA synthetase</keyword>
<keyword id="KW-0067">ATP-binding</keyword>
<keyword id="KW-0963">Cytoplasm</keyword>
<keyword id="KW-0436">Ligase</keyword>
<keyword id="KW-0547">Nucleotide-binding</keyword>
<keyword id="KW-0648">Protein biosynthesis</keyword>
<gene>
    <name evidence="1" type="primary">argS</name>
    <name type="ordered locus">Cvib_1732</name>
</gene>
<comment type="catalytic activity">
    <reaction evidence="1">
        <text>tRNA(Arg) + L-arginine + ATP = L-arginyl-tRNA(Arg) + AMP + diphosphate</text>
        <dbReference type="Rhea" id="RHEA:20301"/>
        <dbReference type="Rhea" id="RHEA-COMP:9658"/>
        <dbReference type="Rhea" id="RHEA-COMP:9673"/>
        <dbReference type="ChEBI" id="CHEBI:30616"/>
        <dbReference type="ChEBI" id="CHEBI:32682"/>
        <dbReference type="ChEBI" id="CHEBI:33019"/>
        <dbReference type="ChEBI" id="CHEBI:78442"/>
        <dbReference type="ChEBI" id="CHEBI:78513"/>
        <dbReference type="ChEBI" id="CHEBI:456215"/>
        <dbReference type="EC" id="6.1.1.19"/>
    </reaction>
</comment>
<comment type="subunit">
    <text evidence="1">Monomer.</text>
</comment>
<comment type="subcellular location">
    <subcellularLocation>
        <location evidence="1">Cytoplasm</location>
    </subcellularLocation>
</comment>
<comment type="similarity">
    <text evidence="1">Belongs to the class-I aminoacyl-tRNA synthetase family.</text>
</comment>
<reference key="1">
    <citation type="submission" date="2007-03" db="EMBL/GenBank/DDBJ databases">
        <title>Complete sequence of Prosthecochloris vibrioformis DSM 265.</title>
        <authorList>
            <consortium name="US DOE Joint Genome Institute"/>
            <person name="Copeland A."/>
            <person name="Lucas S."/>
            <person name="Lapidus A."/>
            <person name="Barry K."/>
            <person name="Detter J.C."/>
            <person name="Glavina del Rio T."/>
            <person name="Hammon N."/>
            <person name="Israni S."/>
            <person name="Pitluck S."/>
            <person name="Schmutz J."/>
            <person name="Larimer F."/>
            <person name="Land M."/>
            <person name="Hauser L."/>
            <person name="Mikhailova N."/>
            <person name="Li T."/>
            <person name="Overmann J."/>
            <person name="Schuster S.C."/>
            <person name="Bryant D.A."/>
            <person name="Richardson P."/>
        </authorList>
    </citation>
    <scope>NUCLEOTIDE SEQUENCE [LARGE SCALE GENOMIC DNA]</scope>
    <source>
        <strain>DSM 265 / 1930</strain>
    </source>
</reference>
<name>SYR_CHLPM</name>